<dbReference type="EMBL" id="DQ465554">
    <property type="protein sequence ID" value="ABE76334.1"/>
    <property type="molecule type" value="Genomic_DNA"/>
</dbReference>
<dbReference type="SMR" id="Q1KN23"/>
<dbReference type="GlyCosmos" id="Q1KN23">
    <property type="glycosylation" value="1 site, No reported glycans"/>
</dbReference>
<dbReference type="GO" id="GO:0030424">
    <property type="term" value="C:axon"/>
    <property type="evidence" value="ECO:0007669"/>
    <property type="project" value="TreeGrafter"/>
</dbReference>
<dbReference type="GO" id="GO:0030425">
    <property type="term" value="C:dendrite"/>
    <property type="evidence" value="ECO:0007669"/>
    <property type="project" value="TreeGrafter"/>
</dbReference>
<dbReference type="GO" id="GO:0005615">
    <property type="term" value="C:extracellular space"/>
    <property type="evidence" value="ECO:0007669"/>
    <property type="project" value="TreeGrafter"/>
</dbReference>
<dbReference type="GO" id="GO:0008021">
    <property type="term" value="C:synaptic vesicle"/>
    <property type="evidence" value="ECO:0007669"/>
    <property type="project" value="TreeGrafter"/>
</dbReference>
<dbReference type="GO" id="GO:0008083">
    <property type="term" value="F:growth factor activity"/>
    <property type="evidence" value="ECO:0007669"/>
    <property type="project" value="UniProtKB-KW"/>
</dbReference>
<dbReference type="GO" id="GO:0005163">
    <property type="term" value="F:nerve growth factor receptor binding"/>
    <property type="evidence" value="ECO:0007669"/>
    <property type="project" value="TreeGrafter"/>
</dbReference>
<dbReference type="GO" id="GO:0007169">
    <property type="term" value="P:cell surface receptor protein tyrosine kinase signaling pathway"/>
    <property type="evidence" value="ECO:0007669"/>
    <property type="project" value="TreeGrafter"/>
</dbReference>
<dbReference type="GO" id="GO:0050804">
    <property type="term" value="P:modulation of chemical synaptic transmission"/>
    <property type="evidence" value="ECO:0007669"/>
    <property type="project" value="TreeGrafter"/>
</dbReference>
<dbReference type="GO" id="GO:0043524">
    <property type="term" value="P:negative regulation of neuron apoptotic process"/>
    <property type="evidence" value="ECO:0007669"/>
    <property type="project" value="TreeGrafter"/>
</dbReference>
<dbReference type="GO" id="GO:0021675">
    <property type="term" value="P:nerve development"/>
    <property type="evidence" value="ECO:0007669"/>
    <property type="project" value="TreeGrafter"/>
</dbReference>
<dbReference type="GO" id="GO:0038180">
    <property type="term" value="P:nerve growth factor signaling pathway"/>
    <property type="evidence" value="ECO:0007669"/>
    <property type="project" value="TreeGrafter"/>
</dbReference>
<dbReference type="GO" id="GO:0048812">
    <property type="term" value="P:neuron projection morphogenesis"/>
    <property type="evidence" value="ECO:0007669"/>
    <property type="project" value="TreeGrafter"/>
</dbReference>
<dbReference type="Gene3D" id="2.10.90.10">
    <property type="entry name" value="Cystine-knot cytokines"/>
    <property type="match status" value="1"/>
</dbReference>
<dbReference type="InterPro" id="IPR029034">
    <property type="entry name" value="Cystine-knot_cytokine"/>
</dbReference>
<dbReference type="InterPro" id="IPR020408">
    <property type="entry name" value="Nerve_growth_factor-like"/>
</dbReference>
<dbReference type="InterPro" id="IPR002072">
    <property type="entry name" value="Nerve_growth_factor-rel"/>
</dbReference>
<dbReference type="InterPro" id="IPR015578">
    <property type="entry name" value="Neurotrophin-3"/>
</dbReference>
<dbReference type="InterPro" id="IPR045815">
    <property type="entry name" value="NTF3_N"/>
</dbReference>
<dbReference type="PANTHER" id="PTHR11589">
    <property type="entry name" value="NERVE GROWTH FACTOR NGF -RELATED"/>
    <property type="match status" value="1"/>
</dbReference>
<dbReference type="PANTHER" id="PTHR11589:SF4">
    <property type="entry name" value="NEUROTROPHIN-3"/>
    <property type="match status" value="1"/>
</dbReference>
<dbReference type="Pfam" id="PF00243">
    <property type="entry name" value="NGF"/>
    <property type="match status" value="1"/>
</dbReference>
<dbReference type="Pfam" id="PF19338">
    <property type="entry name" value="NTF3_N"/>
    <property type="match status" value="1"/>
</dbReference>
<dbReference type="PIRSF" id="PIRSF001789">
    <property type="entry name" value="NGF"/>
    <property type="match status" value="1"/>
</dbReference>
<dbReference type="PRINTS" id="PR01914">
    <property type="entry name" value="NEUROTROPHN3"/>
</dbReference>
<dbReference type="SMART" id="SM00140">
    <property type="entry name" value="NGF"/>
    <property type="match status" value="1"/>
</dbReference>
<dbReference type="SUPFAM" id="SSF57501">
    <property type="entry name" value="Cystine-knot cytokines"/>
    <property type="match status" value="1"/>
</dbReference>
<dbReference type="PROSITE" id="PS50270">
    <property type="entry name" value="NGF_2"/>
    <property type="match status" value="1"/>
</dbReference>
<keyword id="KW-0165">Cleavage on pair of basic residues</keyword>
<keyword id="KW-0325">Glycoprotein</keyword>
<keyword id="KW-0339">Growth factor</keyword>
<keyword id="KW-0964">Secreted</keyword>
<keyword id="KW-0732">Signal</keyword>
<organism>
    <name type="scientific">Chilabothrus striatus</name>
    <name type="common">Haitian boa constrictor</name>
    <name type="synonym">Homalochilus striatus</name>
    <dbReference type="NCBI Taxonomy" id="44152"/>
    <lineage>
        <taxon>Eukaryota</taxon>
        <taxon>Metazoa</taxon>
        <taxon>Chordata</taxon>
        <taxon>Craniata</taxon>
        <taxon>Vertebrata</taxon>
        <taxon>Euteleostomi</taxon>
        <taxon>Lepidosauria</taxon>
        <taxon>Squamata</taxon>
        <taxon>Bifurcata</taxon>
        <taxon>Unidentata</taxon>
        <taxon>Episquamata</taxon>
        <taxon>Toxicofera</taxon>
        <taxon>Serpentes</taxon>
        <taxon>Henophidia</taxon>
        <taxon>Boidae</taxon>
        <taxon>Boinae</taxon>
        <taxon>Chilabothrus</taxon>
    </lineage>
</organism>
<comment type="function">
    <text evidence="1">Seems to promote the survival of visceral and proprioceptive sensory neurons.</text>
</comment>
<comment type="subcellular location">
    <subcellularLocation>
        <location evidence="1">Secreted</location>
    </subcellularLocation>
</comment>
<comment type="similarity">
    <text evidence="3">Belongs to the NGF-beta family.</text>
</comment>
<name>NTF3_CHISR</name>
<feature type="signal peptide" evidence="2">
    <location>
        <begin position="1" status="less than"/>
        <end position="3"/>
    </location>
</feature>
<feature type="propeptide" id="PRO_0000346727" evidence="1">
    <location>
        <begin position="4"/>
        <end position="119"/>
    </location>
</feature>
<feature type="chain" id="PRO_0000346728" description="Neurotrophin-3">
    <location>
        <begin position="120"/>
        <end position="163" status="greater than"/>
    </location>
</feature>
<feature type="glycosylation site" description="N-linked (GlcNAc...) asparagine" evidence="2">
    <location>
        <position position="112"/>
    </location>
</feature>
<feature type="non-terminal residue">
    <location>
        <position position="1"/>
    </location>
</feature>
<feature type="non-terminal residue">
    <location>
        <position position="163"/>
    </location>
</feature>
<gene>
    <name type="primary">NTF3</name>
</gene>
<reference key="1">
    <citation type="journal article" date="2006" name="Mol. Phylogenet. Evol.">
        <title>Dispersal and vicariance: the complex evolutionary history of boid snakes.</title>
        <authorList>
            <person name="Noonan B.P."/>
            <person name="Chippindale P.T."/>
        </authorList>
    </citation>
    <scope>NUCLEOTIDE SEQUENCE [GENOMIC DNA]</scope>
</reference>
<evidence type="ECO:0000250" key="1"/>
<evidence type="ECO:0000255" key="2"/>
<evidence type="ECO:0000305" key="3"/>
<accession>Q1KN23</accession>
<proteinExistence type="inferred from homology"/>
<protein>
    <recommendedName>
        <fullName>Neurotrophin-3</fullName>
        <shortName>NT-3</shortName>
    </recommendedName>
</protein>
<sequence>IQSTSMDQGILTEDSMNSFIRTLIQAGIWKNKVPKQTARTKDGMQTTVKKTEAEADAMASQDTRLGFQPIVSVDAELLRQQRRFSSPRVLLSENTPLEPPPLYLTEEPVVLNRTSRRKREGKSHRGEYSVCDSESRWVTDKSSAVDIRGHQVTVLGEIRMGPS</sequence>